<feature type="chain" id="PRO_1000096504" description="Triosephosphate isomerase">
    <location>
        <begin position="1"/>
        <end position="234"/>
    </location>
</feature>
<feature type="active site" description="Electrophile" evidence="1">
    <location>
        <position position="90"/>
    </location>
</feature>
<feature type="active site" description="Proton acceptor" evidence="1">
    <location>
        <position position="159"/>
    </location>
</feature>
<feature type="binding site" evidence="1">
    <location>
        <begin position="8"/>
        <end position="10"/>
    </location>
    <ligand>
        <name>substrate</name>
    </ligand>
</feature>
<feature type="binding site" evidence="1">
    <location>
        <position position="165"/>
    </location>
    <ligand>
        <name>substrate</name>
    </ligand>
</feature>
<feature type="binding site" evidence="1">
    <location>
        <position position="197"/>
    </location>
    <ligand>
        <name>substrate</name>
    </ligand>
</feature>
<protein>
    <recommendedName>
        <fullName evidence="1">Triosephosphate isomerase</fullName>
        <shortName evidence="1">TIM</shortName>
        <shortName evidence="1">TPI</shortName>
        <ecNumber evidence="1">5.3.1.1</ecNumber>
    </recommendedName>
    <alternativeName>
        <fullName evidence="1">Triose-phosphate isomerase</fullName>
    </alternativeName>
</protein>
<evidence type="ECO:0000255" key="1">
    <source>
        <dbReference type="HAMAP-Rule" id="MF_00147"/>
    </source>
</evidence>
<dbReference type="EC" id="5.3.1.1" evidence="1"/>
<dbReference type="EMBL" id="CP001173">
    <property type="protein sequence ID" value="ACI26945.1"/>
    <property type="molecule type" value="Genomic_DNA"/>
</dbReference>
<dbReference type="RefSeq" id="WP_000161087.1">
    <property type="nucleotide sequence ID" value="NC_011333.1"/>
</dbReference>
<dbReference type="SMR" id="B5Z9W5"/>
<dbReference type="KEGG" id="hpg:HPG27_178"/>
<dbReference type="HOGENOM" id="CLU_024251_2_3_7"/>
<dbReference type="UniPathway" id="UPA00109">
    <property type="reaction ID" value="UER00189"/>
</dbReference>
<dbReference type="UniPathway" id="UPA00138"/>
<dbReference type="Proteomes" id="UP000001735">
    <property type="component" value="Chromosome"/>
</dbReference>
<dbReference type="GO" id="GO:0005829">
    <property type="term" value="C:cytosol"/>
    <property type="evidence" value="ECO:0007669"/>
    <property type="project" value="TreeGrafter"/>
</dbReference>
<dbReference type="GO" id="GO:0004807">
    <property type="term" value="F:triose-phosphate isomerase activity"/>
    <property type="evidence" value="ECO:0007669"/>
    <property type="project" value="UniProtKB-UniRule"/>
</dbReference>
<dbReference type="GO" id="GO:0006094">
    <property type="term" value="P:gluconeogenesis"/>
    <property type="evidence" value="ECO:0007669"/>
    <property type="project" value="UniProtKB-UniRule"/>
</dbReference>
<dbReference type="GO" id="GO:0046166">
    <property type="term" value="P:glyceraldehyde-3-phosphate biosynthetic process"/>
    <property type="evidence" value="ECO:0007669"/>
    <property type="project" value="TreeGrafter"/>
</dbReference>
<dbReference type="GO" id="GO:0019563">
    <property type="term" value="P:glycerol catabolic process"/>
    <property type="evidence" value="ECO:0007669"/>
    <property type="project" value="TreeGrafter"/>
</dbReference>
<dbReference type="GO" id="GO:0006096">
    <property type="term" value="P:glycolytic process"/>
    <property type="evidence" value="ECO:0007669"/>
    <property type="project" value="UniProtKB-UniRule"/>
</dbReference>
<dbReference type="CDD" id="cd00311">
    <property type="entry name" value="TIM"/>
    <property type="match status" value="1"/>
</dbReference>
<dbReference type="FunFam" id="3.20.20.70:FF:000293">
    <property type="entry name" value="Triosephosphate isomerase"/>
    <property type="match status" value="1"/>
</dbReference>
<dbReference type="Gene3D" id="3.20.20.70">
    <property type="entry name" value="Aldolase class I"/>
    <property type="match status" value="1"/>
</dbReference>
<dbReference type="HAMAP" id="MF_00147_B">
    <property type="entry name" value="TIM_B"/>
    <property type="match status" value="1"/>
</dbReference>
<dbReference type="InterPro" id="IPR013785">
    <property type="entry name" value="Aldolase_TIM"/>
</dbReference>
<dbReference type="InterPro" id="IPR035990">
    <property type="entry name" value="TIM_sf"/>
</dbReference>
<dbReference type="InterPro" id="IPR022896">
    <property type="entry name" value="TrioseP_Isoase_bac/euk"/>
</dbReference>
<dbReference type="InterPro" id="IPR000652">
    <property type="entry name" value="Triosephosphate_isomerase"/>
</dbReference>
<dbReference type="InterPro" id="IPR020861">
    <property type="entry name" value="Triosephosphate_isomerase_AS"/>
</dbReference>
<dbReference type="NCBIfam" id="NF000728">
    <property type="entry name" value="PRK00042.3-2"/>
    <property type="match status" value="1"/>
</dbReference>
<dbReference type="NCBIfam" id="NF000729">
    <property type="entry name" value="PRK00042.3-3"/>
    <property type="match status" value="1"/>
</dbReference>
<dbReference type="PANTHER" id="PTHR21139">
    <property type="entry name" value="TRIOSEPHOSPHATE ISOMERASE"/>
    <property type="match status" value="1"/>
</dbReference>
<dbReference type="PANTHER" id="PTHR21139:SF42">
    <property type="entry name" value="TRIOSEPHOSPHATE ISOMERASE"/>
    <property type="match status" value="1"/>
</dbReference>
<dbReference type="Pfam" id="PF00121">
    <property type="entry name" value="TIM"/>
    <property type="match status" value="1"/>
</dbReference>
<dbReference type="SUPFAM" id="SSF51351">
    <property type="entry name" value="Triosephosphate isomerase (TIM)"/>
    <property type="match status" value="1"/>
</dbReference>
<dbReference type="PROSITE" id="PS00171">
    <property type="entry name" value="TIM_1"/>
    <property type="match status" value="1"/>
</dbReference>
<dbReference type="PROSITE" id="PS51440">
    <property type="entry name" value="TIM_2"/>
    <property type="match status" value="1"/>
</dbReference>
<gene>
    <name evidence="1" type="primary">tpiA</name>
    <name type="ordered locus">HPG27_178</name>
</gene>
<accession>B5Z9W5</accession>
<reference key="1">
    <citation type="journal article" date="2009" name="J. Bacteriol.">
        <title>The complete genome sequence of Helicobacter pylori strain G27.</title>
        <authorList>
            <person name="Baltrus D.A."/>
            <person name="Amieva M.R."/>
            <person name="Covacci A."/>
            <person name="Lowe T.M."/>
            <person name="Merrell D.S."/>
            <person name="Ottemann K.M."/>
            <person name="Stein M."/>
            <person name="Salama N.R."/>
            <person name="Guillemin K."/>
        </authorList>
    </citation>
    <scope>NUCLEOTIDE SEQUENCE [LARGE SCALE GENOMIC DNA]</scope>
    <source>
        <strain>G27</strain>
    </source>
</reference>
<sequence>MTKIAMANFKSAMPVFKSHAYLKELEKTLKPQHFDRVFVFPDFLGLLPNSFLHFTLGAQNAYPRDCGAFTGEITSKHLEELKIHTLLIGHSERRALLKESPSFLKEKFGFFKDKNFKIVYCIGEELTTREKGFRAVKEFLNEQLENIDLNYSNLIVAYEPIWAIGTKKSASLEDIYLTHGFLKQILNQKTPLLYGGSVNVQNAKEILGIDSVDGLLIGSASWELENFKTIISFL</sequence>
<keyword id="KW-0963">Cytoplasm</keyword>
<keyword id="KW-0312">Gluconeogenesis</keyword>
<keyword id="KW-0324">Glycolysis</keyword>
<keyword id="KW-0413">Isomerase</keyword>
<keyword id="KW-1185">Reference proteome</keyword>
<name>TPIS_HELPG</name>
<comment type="function">
    <text evidence="1">Involved in the gluconeogenesis. Catalyzes stereospecifically the conversion of dihydroxyacetone phosphate (DHAP) to D-glyceraldehyde-3-phosphate (G3P).</text>
</comment>
<comment type="catalytic activity">
    <reaction evidence="1">
        <text>D-glyceraldehyde 3-phosphate = dihydroxyacetone phosphate</text>
        <dbReference type="Rhea" id="RHEA:18585"/>
        <dbReference type="ChEBI" id="CHEBI:57642"/>
        <dbReference type="ChEBI" id="CHEBI:59776"/>
        <dbReference type="EC" id="5.3.1.1"/>
    </reaction>
</comment>
<comment type="pathway">
    <text evidence="1">Carbohydrate biosynthesis; gluconeogenesis.</text>
</comment>
<comment type="pathway">
    <text evidence="1">Carbohydrate degradation; glycolysis; D-glyceraldehyde 3-phosphate from glycerone phosphate: step 1/1.</text>
</comment>
<comment type="subunit">
    <text evidence="1">Homodimer.</text>
</comment>
<comment type="subcellular location">
    <subcellularLocation>
        <location evidence="1">Cytoplasm</location>
    </subcellularLocation>
</comment>
<comment type="similarity">
    <text evidence="1">Belongs to the triosephosphate isomerase family.</text>
</comment>
<proteinExistence type="inferred from homology"/>
<organism>
    <name type="scientific">Helicobacter pylori (strain G27)</name>
    <dbReference type="NCBI Taxonomy" id="563041"/>
    <lineage>
        <taxon>Bacteria</taxon>
        <taxon>Pseudomonadati</taxon>
        <taxon>Campylobacterota</taxon>
        <taxon>Epsilonproteobacteria</taxon>
        <taxon>Campylobacterales</taxon>
        <taxon>Helicobacteraceae</taxon>
        <taxon>Helicobacter</taxon>
    </lineage>
</organism>